<name>RL13_PYRAE</name>
<evidence type="ECO:0000255" key="1">
    <source>
        <dbReference type="HAMAP-Rule" id="MF_01366"/>
    </source>
</evidence>
<evidence type="ECO:0000305" key="2"/>
<accession>Q8ZYQ1</accession>
<comment type="function">
    <text evidence="1">This protein is one of the early assembly proteins of the 50S ribosomal subunit, although it is not seen to bind rRNA by itself. It is important during the early stages of 50S assembly.</text>
</comment>
<comment type="subunit">
    <text evidence="1">Part of the 50S ribosomal subunit.</text>
</comment>
<comment type="similarity">
    <text evidence="1">Belongs to the universal ribosomal protein uL13 family.</text>
</comment>
<feature type="chain" id="PRO_0000261848" description="Large ribosomal subunit protein uL13">
    <location>
        <begin position="1"/>
        <end position="187"/>
    </location>
</feature>
<sequence length="187" mass="21814">MNVVKRPLDISQLPDAGEVIVDAEGHVAGRLATYIAKALLERPNLRIVVVNAEKLVITGDEKMVIEWFKRKISEWRTHYNPEKAGPKVPRRPDRVFKRIVRGMLPKKSETGRSALKRLRVYMSIPIEIMQRKRLVLYEVPEAKLRLRPLLQYTTLEEVWRSIDPEAWEKWRRAVEVWGKKLKQVASG</sequence>
<protein>
    <recommendedName>
        <fullName evidence="1">Large ribosomal subunit protein uL13</fullName>
    </recommendedName>
    <alternativeName>
        <fullName evidence="2">50S ribosomal protein L13</fullName>
    </alternativeName>
</protein>
<reference key="1">
    <citation type="journal article" date="2002" name="Proc. Natl. Acad. Sci. U.S.A.">
        <title>Genome sequence of the hyperthermophilic crenarchaeon Pyrobaculum aerophilum.</title>
        <authorList>
            <person name="Fitz-Gibbon S.T."/>
            <person name="Ladner H."/>
            <person name="Kim U.-J."/>
            <person name="Stetter K.O."/>
            <person name="Simon M.I."/>
            <person name="Miller J.H."/>
        </authorList>
    </citation>
    <scope>NUCLEOTIDE SEQUENCE [LARGE SCALE GENOMIC DNA]</scope>
    <source>
        <strain>ATCC 51768 / DSM 7523 / JCM 9630 / CIP 104966 / NBRC 100827 / IM2</strain>
    </source>
</reference>
<dbReference type="EMBL" id="AE009441">
    <property type="protein sequence ID" value="AAL62942.1"/>
    <property type="molecule type" value="Genomic_DNA"/>
</dbReference>
<dbReference type="RefSeq" id="WP_011007414.1">
    <property type="nucleotide sequence ID" value="NC_003364.1"/>
</dbReference>
<dbReference type="SMR" id="Q8ZYQ1"/>
<dbReference type="FunCoup" id="Q8ZYQ1">
    <property type="interactions" value="155"/>
</dbReference>
<dbReference type="STRING" id="178306.PAE0673"/>
<dbReference type="EnsemblBacteria" id="AAL62942">
    <property type="protein sequence ID" value="AAL62942"/>
    <property type="gene ID" value="PAE0673"/>
</dbReference>
<dbReference type="GeneID" id="1465167"/>
<dbReference type="KEGG" id="pai:PAE0673"/>
<dbReference type="PATRIC" id="fig|178306.9.peg.487"/>
<dbReference type="eggNOG" id="arCOG04242">
    <property type="taxonomic scope" value="Archaea"/>
</dbReference>
<dbReference type="HOGENOM" id="CLU_076922_1_0_2"/>
<dbReference type="InParanoid" id="Q8ZYQ1"/>
<dbReference type="Proteomes" id="UP000002439">
    <property type="component" value="Chromosome"/>
</dbReference>
<dbReference type="GO" id="GO:0022625">
    <property type="term" value="C:cytosolic large ribosomal subunit"/>
    <property type="evidence" value="ECO:0000318"/>
    <property type="project" value="GO_Central"/>
</dbReference>
<dbReference type="GO" id="GO:0005840">
    <property type="term" value="C:ribosome"/>
    <property type="evidence" value="ECO:0000318"/>
    <property type="project" value="GO_Central"/>
</dbReference>
<dbReference type="GO" id="GO:0003729">
    <property type="term" value="F:mRNA binding"/>
    <property type="evidence" value="ECO:0000318"/>
    <property type="project" value="GO_Central"/>
</dbReference>
<dbReference type="GO" id="GO:0003735">
    <property type="term" value="F:structural constituent of ribosome"/>
    <property type="evidence" value="ECO:0000318"/>
    <property type="project" value="GO_Central"/>
</dbReference>
<dbReference type="GO" id="GO:0017148">
    <property type="term" value="P:negative regulation of translation"/>
    <property type="evidence" value="ECO:0000318"/>
    <property type="project" value="GO_Central"/>
</dbReference>
<dbReference type="GO" id="GO:0006412">
    <property type="term" value="P:translation"/>
    <property type="evidence" value="ECO:0007669"/>
    <property type="project" value="UniProtKB-UniRule"/>
</dbReference>
<dbReference type="CDD" id="cd00392">
    <property type="entry name" value="Ribosomal_L13"/>
    <property type="match status" value="1"/>
</dbReference>
<dbReference type="Gene3D" id="3.90.1180.10">
    <property type="entry name" value="Ribosomal protein L13"/>
    <property type="match status" value="1"/>
</dbReference>
<dbReference type="HAMAP" id="MF_01366">
    <property type="entry name" value="Ribosomal_uL13"/>
    <property type="match status" value="1"/>
</dbReference>
<dbReference type="InterPro" id="IPR005822">
    <property type="entry name" value="Ribosomal_uL13"/>
</dbReference>
<dbReference type="InterPro" id="IPR005823">
    <property type="entry name" value="Ribosomal_uL13_bac-type"/>
</dbReference>
<dbReference type="InterPro" id="IPR023563">
    <property type="entry name" value="Ribosomal_uL13_CS"/>
</dbReference>
<dbReference type="InterPro" id="IPR005755">
    <property type="entry name" value="Ribosomal_uL13_euk/arc"/>
</dbReference>
<dbReference type="InterPro" id="IPR036899">
    <property type="entry name" value="Ribosomal_uL13_sf"/>
</dbReference>
<dbReference type="NCBIfam" id="TIGR01077">
    <property type="entry name" value="L13_A_E"/>
    <property type="match status" value="1"/>
</dbReference>
<dbReference type="NCBIfam" id="NF005004">
    <property type="entry name" value="PRK06394.1"/>
    <property type="match status" value="1"/>
</dbReference>
<dbReference type="PANTHER" id="PTHR11545:SF3">
    <property type="entry name" value="LARGE RIBOSOMAL SUBUNIT PROTEIN UL13"/>
    <property type="match status" value="1"/>
</dbReference>
<dbReference type="PANTHER" id="PTHR11545">
    <property type="entry name" value="RIBOSOMAL PROTEIN L13"/>
    <property type="match status" value="1"/>
</dbReference>
<dbReference type="Pfam" id="PF00572">
    <property type="entry name" value="Ribosomal_L13"/>
    <property type="match status" value="1"/>
</dbReference>
<dbReference type="PIRSF" id="PIRSF002181">
    <property type="entry name" value="Ribosomal_L13"/>
    <property type="match status" value="1"/>
</dbReference>
<dbReference type="SUPFAM" id="SSF52161">
    <property type="entry name" value="Ribosomal protein L13"/>
    <property type="match status" value="1"/>
</dbReference>
<dbReference type="PROSITE" id="PS00783">
    <property type="entry name" value="RIBOSOMAL_L13"/>
    <property type="match status" value="1"/>
</dbReference>
<organism>
    <name type="scientific">Pyrobaculum aerophilum (strain ATCC 51768 / DSM 7523 / JCM 9630 / CIP 104966 / NBRC 100827 / IM2)</name>
    <dbReference type="NCBI Taxonomy" id="178306"/>
    <lineage>
        <taxon>Archaea</taxon>
        <taxon>Thermoproteota</taxon>
        <taxon>Thermoprotei</taxon>
        <taxon>Thermoproteales</taxon>
        <taxon>Thermoproteaceae</taxon>
        <taxon>Pyrobaculum</taxon>
    </lineage>
</organism>
<gene>
    <name evidence="1" type="primary">rpl13</name>
    <name type="ordered locus">PAE0673</name>
</gene>
<proteinExistence type="inferred from homology"/>
<keyword id="KW-1185">Reference proteome</keyword>
<keyword id="KW-0687">Ribonucleoprotein</keyword>
<keyword id="KW-0689">Ribosomal protein</keyword>